<gene>
    <name evidence="7" type="primary">Dtd</name>
    <name evidence="7" type="ORF">CG18643</name>
</gene>
<dbReference type="EC" id="3.1.1.96" evidence="3"/>
<dbReference type="EMBL" id="AE014297">
    <property type="protein sequence ID" value="AAF54636.2"/>
    <property type="molecule type" value="Genomic_DNA"/>
</dbReference>
<dbReference type="EMBL" id="BT022294">
    <property type="protein sequence ID" value="AAY54710.1"/>
    <property type="molecule type" value="mRNA"/>
</dbReference>
<dbReference type="EMBL" id="BT022909">
    <property type="protein sequence ID" value="AAY55325.1"/>
    <property type="molecule type" value="mRNA"/>
</dbReference>
<dbReference type="EMBL" id="KX531645">
    <property type="protein sequence ID" value="ANY27455.1"/>
    <property type="molecule type" value="mRNA"/>
</dbReference>
<dbReference type="RefSeq" id="NP_650072.2">
    <property type="nucleotide sequence ID" value="NM_141815.2"/>
</dbReference>
<dbReference type="SMR" id="Q9VGP0"/>
<dbReference type="FunCoup" id="Q9VGP0">
    <property type="interactions" value="574"/>
</dbReference>
<dbReference type="STRING" id="7227.FBpp0290123"/>
<dbReference type="PaxDb" id="7227-FBpp0290123"/>
<dbReference type="DNASU" id="41371"/>
<dbReference type="EnsemblMetazoa" id="FBtr0300901">
    <property type="protein sequence ID" value="FBpp0290123"/>
    <property type="gene ID" value="FBgn0037898"/>
</dbReference>
<dbReference type="GeneID" id="41371"/>
<dbReference type="KEGG" id="dme:Dmel_CG18643"/>
<dbReference type="UCSC" id="CG18643-RA">
    <property type="organism name" value="d. melanogaster"/>
</dbReference>
<dbReference type="AGR" id="FB:FBgn0037898"/>
<dbReference type="CTD" id="41371"/>
<dbReference type="FlyBase" id="FBgn0037898">
    <property type="gene designation" value="Dtd"/>
</dbReference>
<dbReference type="VEuPathDB" id="VectorBase:FBgn0037898"/>
<dbReference type="eggNOG" id="KOG3323">
    <property type="taxonomic scope" value="Eukaryota"/>
</dbReference>
<dbReference type="GeneTree" id="ENSGT00940000153431"/>
<dbReference type="HOGENOM" id="CLU_076901_0_4_1"/>
<dbReference type="InParanoid" id="Q9VGP0"/>
<dbReference type="OMA" id="VFGADMK"/>
<dbReference type="OrthoDB" id="275783at2759"/>
<dbReference type="PhylomeDB" id="Q9VGP0"/>
<dbReference type="BioGRID-ORCS" id="41371">
    <property type="hits" value="0 hits in 1 CRISPR screen"/>
</dbReference>
<dbReference type="GenomeRNAi" id="41371"/>
<dbReference type="PRO" id="PR:Q9VGP0"/>
<dbReference type="Proteomes" id="UP000000803">
    <property type="component" value="Chromosome 3R"/>
</dbReference>
<dbReference type="Bgee" id="FBgn0037898">
    <property type="expression patterns" value="Expressed in oviduct (Drosophila) and 64 other cell types or tissues"/>
</dbReference>
<dbReference type="ExpressionAtlas" id="Q9VGP0">
    <property type="expression patterns" value="baseline and differential"/>
</dbReference>
<dbReference type="GO" id="GO:0005737">
    <property type="term" value="C:cytoplasm"/>
    <property type="evidence" value="ECO:0000318"/>
    <property type="project" value="GO_Central"/>
</dbReference>
<dbReference type="GO" id="GO:0051500">
    <property type="term" value="F:D-tyrosyl-tRNA(Tyr) deacylase activity"/>
    <property type="evidence" value="ECO:0000318"/>
    <property type="project" value="GO_Central"/>
</dbReference>
<dbReference type="GO" id="GO:0106026">
    <property type="term" value="F:Gly-tRNA(Ala) deacylase activity"/>
    <property type="evidence" value="ECO:0000314"/>
    <property type="project" value="UniProtKB"/>
</dbReference>
<dbReference type="GO" id="GO:0000049">
    <property type="term" value="F:tRNA binding"/>
    <property type="evidence" value="ECO:0007669"/>
    <property type="project" value="UniProtKB-KW"/>
</dbReference>
<dbReference type="GO" id="GO:0006399">
    <property type="term" value="P:tRNA metabolic process"/>
    <property type="evidence" value="ECO:0000318"/>
    <property type="project" value="GO_Central"/>
</dbReference>
<dbReference type="CDD" id="cd00563">
    <property type="entry name" value="Dtyr_deacylase"/>
    <property type="match status" value="1"/>
</dbReference>
<dbReference type="FunFam" id="3.50.80.10:FF:000001">
    <property type="entry name" value="D-aminoacyl-tRNA deacylase"/>
    <property type="match status" value="1"/>
</dbReference>
<dbReference type="Gene3D" id="3.50.80.10">
    <property type="entry name" value="D-tyrosyl-tRNA(Tyr) deacylase"/>
    <property type="match status" value="1"/>
</dbReference>
<dbReference type="HAMAP" id="MF_00518">
    <property type="entry name" value="Deacylase_Dtd"/>
    <property type="match status" value="1"/>
</dbReference>
<dbReference type="InterPro" id="IPR003732">
    <property type="entry name" value="Daa-tRNA_deacyls_DTD"/>
</dbReference>
<dbReference type="InterPro" id="IPR023509">
    <property type="entry name" value="DTD-like_sf"/>
</dbReference>
<dbReference type="NCBIfam" id="TIGR00256">
    <property type="entry name" value="D-aminoacyl-tRNA deacylase"/>
    <property type="match status" value="1"/>
</dbReference>
<dbReference type="PANTHER" id="PTHR10472:SF5">
    <property type="entry name" value="D-AMINOACYL-TRNA DEACYLASE 1"/>
    <property type="match status" value="1"/>
</dbReference>
<dbReference type="PANTHER" id="PTHR10472">
    <property type="entry name" value="D-TYROSYL-TRNA TYR DEACYLASE"/>
    <property type="match status" value="1"/>
</dbReference>
<dbReference type="Pfam" id="PF02580">
    <property type="entry name" value="Tyr_Deacylase"/>
    <property type="match status" value="1"/>
</dbReference>
<dbReference type="SUPFAM" id="SSF69500">
    <property type="entry name" value="DTD-like"/>
    <property type="match status" value="1"/>
</dbReference>
<evidence type="ECO:0000250" key="1">
    <source>
        <dbReference type="UniProtKB" id="Q8IIS0"/>
    </source>
</evidence>
<evidence type="ECO:0000269" key="2">
    <source>
    </source>
</evidence>
<evidence type="ECO:0000269" key="3">
    <source>
    </source>
</evidence>
<evidence type="ECO:0000303" key="4">
    <source>
    </source>
</evidence>
<evidence type="ECO:0000303" key="5">
    <source>
    </source>
</evidence>
<evidence type="ECO:0000305" key="6"/>
<evidence type="ECO:0000312" key="7">
    <source>
        <dbReference type="FlyBase" id="FBgn0037898"/>
    </source>
</evidence>
<comment type="function">
    <text evidence="1 2 3">An aminoacyl-tRNA editing enzyme that deacylates mischarged D-aminoacyl-tRNAs (By similarity). Hydrolyzes correctly charged, achiral, glycyl-tRNA(Gly) (PubMed:27224426). Deacylates mischarged endogenous and E.coli glycyl-tRNA(Ala), protecting cells against glycine mischarging by AlaRS (PubMed:28362257). Acts via tRNA-based rather than protein-based catalysis; rejects L-amino acids rather than detecting D-amino acids in the active site (By similarity). By recycling D-aminoacyl-tRNA to D-amino acids and free tRNA molecules, this enzyme counteracts the toxicity associated with the formation of D-aminoacyl-tRNA entities in vivo and helps enforce protein L-homochirality (By similarity).</text>
</comment>
<comment type="catalytic activity">
    <reaction evidence="3">
        <text>glycyl-tRNA(Ala) + H2O = tRNA(Ala) + glycine + H(+)</text>
        <dbReference type="Rhea" id="RHEA:53744"/>
        <dbReference type="Rhea" id="RHEA-COMP:9657"/>
        <dbReference type="Rhea" id="RHEA-COMP:13640"/>
        <dbReference type="ChEBI" id="CHEBI:15377"/>
        <dbReference type="ChEBI" id="CHEBI:15378"/>
        <dbReference type="ChEBI" id="CHEBI:57305"/>
        <dbReference type="ChEBI" id="CHEBI:78442"/>
        <dbReference type="ChEBI" id="CHEBI:78522"/>
        <dbReference type="EC" id="3.1.1.96"/>
    </reaction>
</comment>
<comment type="catalytic activity">
    <reaction evidence="3">
        <text>a D-aminoacyl-tRNA + H2O = a tRNA + a D-alpha-amino acid + H(+)</text>
        <dbReference type="Rhea" id="RHEA:13953"/>
        <dbReference type="Rhea" id="RHEA-COMP:10123"/>
        <dbReference type="Rhea" id="RHEA-COMP:10124"/>
        <dbReference type="ChEBI" id="CHEBI:15377"/>
        <dbReference type="ChEBI" id="CHEBI:15378"/>
        <dbReference type="ChEBI" id="CHEBI:59871"/>
        <dbReference type="ChEBI" id="CHEBI:78442"/>
        <dbReference type="ChEBI" id="CHEBI:79333"/>
        <dbReference type="EC" id="3.1.1.96"/>
    </reaction>
</comment>
<comment type="subunit">
    <text evidence="1">Homodimer.</text>
</comment>
<comment type="subcellular location">
    <subcellularLocation>
        <location evidence="1">Cytoplasm</location>
    </subcellularLocation>
</comment>
<comment type="domain">
    <text evidence="1">A Gly-cisPro motif from one monomer fits into the active site of the other monomer to allow specific chiral rejection of L-amino acids.</text>
</comment>
<comment type="similarity">
    <text evidence="6">Belongs to the DTD family.</text>
</comment>
<sequence length="158" mass="17889">MRAVIQRVKAAKVTVLDELVSSIGPGLCVLVGIKASDTAKDVEYLVRKILALRLFEEEGKRWQKSVKDLNLELLCVSQFTLYHRLKGNKPDFLAAMKGEEAQELYNQFLDRLGQSYDSTKIKDGKFGAYMQVHIENDGPVTINLESPEQKDTDREVDK</sequence>
<feature type="chain" id="PRO_0000441701" description="D-aminoacyl-tRNA deacylase">
    <location>
        <begin position="1"/>
        <end position="158"/>
    </location>
</feature>
<feature type="short sequence motif" description="Gly-cisPro motif, important for rejection of L-amino acids" evidence="1">
    <location>
        <begin position="138"/>
        <end position="139"/>
    </location>
</feature>
<feature type="sequence conflict" description="In Ref. 3; AAY55325." evidence="6" ref="3">
    <original>L</original>
    <variation>S</variation>
    <location>
        <position position="93"/>
    </location>
</feature>
<feature type="sequence conflict" description="In Ref. 3; AAY55325." evidence="6" ref="3">
    <original>T</original>
    <variation>S</variation>
    <location>
        <position position="119"/>
    </location>
</feature>
<keyword id="KW-0963">Cytoplasm</keyword>
<keyword id="KW-0378">Hydrolase</keyword>
<keyword id="KW-1185">Reference proteome</keyword>
<keyword id="KW-0694">RNA-binding</keyword>
<keyword id="KW-0820">tRNA-binding</keyword>
<proteinExistence type="evidence at protein level"/>
<name>DTD_DROME</name>
<reference key="1">
    <citation type="journal article" date="2000" name="Science">
        <title>The genome sequence of Drosophila melanogaster.</title>
        <authorList>
            <person name="Adams M.D."/>
            <person name="Celniker S.E."/>
            <person name="Holt R.A."/>
            <person name="Evans C.A."/>
            <person name="Gocayne J.D."/>
            <person name="Amanatides P.G."/>
            <person name="Scherer S.E."/>
            <person name="Li P.W."/>
            <person name="Hoskins R.A."/>
            <person name="Galle R.F."/>
            <person name="George R.A."/>
            <person name="Lewis S.E."/>
            <person name="Richards S."/>
            <person name="Ashburner M."/>
            <person name="Henderson S.N."/>
            <person name="Sutton G.G."/>
            <person name="Wortman J.R."/>
            <person name="Yandell M.D."/>
            <person name="Zhang Q."/>
            <person name="Chen L.X."/>
            <person name="Brandon R.C."/>
            <person name="Rogers Y.-H.C."/>
            <person name="Blazej R.G."/>
            <person name="Champe M."/>
            <person name="Pfeiffer B.D."/>
            <person name="Wan K.H."/>
            <person name="Doyle C."/>
            <person name="Baxter E.G."/>
            <person name="Helt G."/>
            <person name="Nelson C.R."/>
            <person name="Miklos G.L.G."/>
            <person name="Abril J.F."/>
            <person name="Agbayani A."/>
            <person name="An H.-J."/>
            <person name="Andrews-Pfannkoch C."/>
            <person name="Baldwin D."/>
            <person name="Ballew R.M."/>
            <person name="Basu A."/>
            <person name="Baxendale J."/>
            <person name="Bayraktaroglu L."/>
            <person name="Beasley E.M."/>
            <person name="Beeson K.Y."/>
            <person name="Benos P.V."/>
            <person name="Berman B.P."/>
            <person name="Bhandari D."/>
            <person name="Bolshakov S."/>
            <person name="Borkova D."/>
            <person name="Botchan M.R."/>
            <person name="Bouck J."/>
            <person name="Brokstein P."/>
            <person name="Brottier P."/>
            <person name="Burtis K.C."/>
            <person name="Busam D.A."/>
            <person name="Butler H."/>
            <person name="Cadieu E."/>
            <person name="Center A."/>
            <person name="Chandra I."/>
            <person name="Cherry J.M."/>
            <person name="Cawley S."/>
            <person name="Dahlke C."/>
            <person name="Davenport L.B."/>
            <person name="Davies P."/>
            <person name="de Pablos B."/>
            <person name="Delcher A."/>
            <person name="Deng Z."/>
            <person name="Mays A.D."/>
            <person name="Dew I."/>
            <person name="Dietz S.M."/>
            <person name="Dodson K."/>
            <person name="Doup L.E."/>
            <person name="Downes M."/>
            <person name="Dugan-Rocha S."/>
            <person name="Dunkov B.C."/>
            <person name="Dunn P."/>
            <person name="Durbin K.J."/>
            <person name="Evangelista C.C."/>
            <person name="Ferraz C."/>
            <person name="Ferriera S."/>
            <person name="Fleischmann W."/>
            <person name="Fosler C."/>
            <person name="Gabrielian A.E."/>
            <person name="Garg N.S."/>
            <person name="Gelbart W.M."/>
            <person name="Glasser K."/>
            <person name="Glodek A."/>
            <person name="Gong F."/>
            <person name="Gorrell J.H."/>
            <person name="Gu Z."/>
            <person name="Guan P."/>
            <person name="Harris M."/>
            <person name="Harris N.L."/>
            <person name="Harvey D.A."/>
            <person name="Heiman T.J."/>
            <person name="Hernandez J.R."/>
            <person name="Houck J."/>
            <person name="Hostin D."/>
            <person name="Houston K.A."/>
            <person name="Howland T.J."/>
            <person name="Wei M.-H."/>
            <person name="Ibegwam C."/>
            <person name="Jalali M."/>
            <person name="Kalush F."/>
            <person name="Karpen G.H."/>
            <person name="Ke Z."/>
            <person name="Kennison J.A."/>
            <person name="Ketchum K.A."/>
            <person name="Kimmel B.E."/>
            <person name="Kodira C.D."/>
            <person name="Kraft C.L."/>
            <person name="Kravitz S."/>
            <person name="Kulp D."/>
            <person name="Lai Z."/>
            <person name="Lasko P."/>
            <person name="Lei Y."/>
            <person name="Levitsky A.A."/>
            <person name="Li J.H."/>
            <person name="Li Z."/>
            <person name="Liang Y."/>
            <person name="Lin X."/>
            <person name="Liu X."/>
            <person name="Mattei B."/>
            <person name="McIntosh T.C."/>
            <person name="McLeod M.P."/>
            <person name="McPherson D."/>
            <person name="Merkulov G."/>
            <person name="Milshina N.V."/>
            <person name="Mobarry C."/>
            <person name="Morris J."/>
            <person name="Moshrefi A."/>
            <person name="Mount S.M."/>
            <person name="Moy M."/>
            <person name="Murphy B."/>
            <person name="Murphy L."/>
            <person name="Muzny D.M."/>
            <person name="Nelson D.L."/>
            <person name="Nelson D.R."/>
            <person name="Nelson K.A."/>
            <person name="Nixon K."/>
            <person name="Nusskern D.R."/>
            <person name="Pacleb J.M."/>
            <person name="Palazzolo M."/>
            <person name="Pittman G.S."/>
            <person name="Pan S."/>
            <person name="Pollard J."/>
            <person name="Puri V."/>
            <person name="Reese M.G."/>
            <person name="Reinert K."/>
            <person name="Remington K."/>
            <person name="Saunders R.D.C."/>
            <person name="Scheeler F."/>
            <person name="Shen H."/>
            <person name="Shue B.C."/>
            <person name="Siden-Kiamos I."/>
            <person name="Simpson M."/>
            <person name="Skupski M.P."/>
            <person name="Smith T.J."/>
            <person name="Spier E."/>
            <person name="Spradling A.C."/>
            <person name="Stapleton M."/>
            <person name="Strong R."/>
            <person name="Sun E."/>
            <person name="Svirskas R."/>
            <person name="Tector C."/>
            <person name="Turner R."/>
            <person name="Venter E."/>
            <person name="Wang A.H."/>
            <person name="Wang X."/>
            <person name="Wang Z.-Y."/>
            <person name="Wassarman D.A."/>
            <person name="Weinstock G.M."/>
            <person name="Weissenbach J."/>
            <person name="Williams S.M."/>
            <person name="Woodage T."/>
            <person name="Worley K.C."/>
            <person name="Wu D."/>
            <person name="Yang S."/>
            <person name="Yao Q.A."/>
            <person name="Ye J."/>
            <person name="Yeh R.-F."/>
            <person name="Zaveri J.S."/>
            <person name="Zhan M."/>
            <person name="Zhang G."/>
            <person name="Zhao Q."/>
            <person name="Zheng L."/>
            <person name="Zheng X.H."/>
            <person name="Zhong F.N."/>
            <person name="Zhong W."/>
            <person name="Zhou X."/>
            <person name="Zhu S.C."/>
            <person name="Zhu X."/>
            <person name="Smith H.O."/>
            <person name="Gibbs R.A."/>
            <person name="Myers E.W."/>
            <person name="Rubin G.M."/>
            <person name="Venter J.C."/>
        </authorList>
    </citation>
    <scope>NUCLEOTIDE SEQUENCE [LARGE SCALE GENOMIC DNA]</scope>
    <source>
        <strain>Berkeley</strain>
    </source>
</reference>
<reference key="2">
    <citation type="journal article" date="2002" name="Genome Biol.">
        <title>Annotation of the Drosophila melanogaster euchromatic genome: a systematic review.</title>
        <authorList>
            <person name="Misra S."/>
            <person name="Crosby M.A."/>
            <person name="Mungall C.J."/>
            <person name="Matthews B.B."/>
            <person name="Campbell K.S."/>
            <person name="Hradecky P."/>
            <person name="Huang Y."/>
            <person name="Kaminker J.S."/>
            <person name="Millburn G.H."/>
            <person name="Prochnik S.E."/>
            <person name="Smith C.D."/>
            <person name="Tupy J.L."/>
            <person name="Whitfield E.J."/>
            <person name="Bayraktaroglu L."/>
            <person name="Berman B.P."/>
            <person name="Bettencourt B.R."/>
            <person name="Celniker S.E."/>
            <person name="de Grey A.D.N.J."/>
            <person name="Drysdale R.A."/>
            <person name="Harris N.L."/>
            <person name="Richter J."/>
            <person name="Russo S."/>
            <person name="Schroeder A.J."/>
            <person name="Shu S.Q."/>
            <person name="Stapleton M."/>
            <person name="Yamada C."/>
            <person name="Ashburner M."/>
            <person name="Gelbart W.M."/>
            <person name="Rubin G.M."/>
            <person name="Lewis S.E."/>
        </authorList>
    </citation>
    <scope>GENOME REANNOTATION</scope>
    <source>
        <strain>Berkeley</strain>
    </source>
</reference>
<reference key="3">
    <citation type="submission" date="2005-05" db="EMBL/GenBank/DDBJ databases">
        <authorList>
            <person name="Stapleton M."/>
            <person name="Carlson J."/>
            <person name="Chavez C."/>
            <person name="Frise E."/>
            <person name="George R."/>
            <person name="Pacleb J."/>
            <person name="Park S."/>
            <person name="Wan K."/>
            <person name="Yu C."/>
            <person name="Celniker S."/>
        </authorList>
    </citation>
    <scope>NUCLEOTIDE SEQUENCE [LARGE SCALE MRNA]</scope>
</reference>
<reference key="4">
    <citation type="submission" date="2016-07" db="EMBL/GenBank/DDBJ databases">
        <authorList>
            <person name="Florea S."/>
            <person name="Webb J.S."/>
            <person name="Jaromczyk J."/>
            <person name="Schardl C.L."/>
        </authorList>
    </citation>
    <scope>NUCLEOTIDE SEQUENCE [LARGE SCALE MRNA]</scope>
</reference>
<reference key="5">
    <citation type="journal article" date="2016" name="PLoS Biol.">
        <title>Elongation factor Tu prevents misediting of Gly-tRNA(Gly) caused by the design behind the chiral proofreading site of D-aminoacyl-tRNA deacylase.</title>
        <authorList>
            <person name="Routh S.B."/>
            <person name="Pawar K.I."/>
            <person name="Ahmad S."/>
            <person name="Singh S."/>
            <person name="Suma K."/>
            <person name="Kumar M."/>
            <person name="Kuncha S.K."/>
            <person name="Yadav K."/>
            <person name="Kruparani S.P."/>
            <person name="Sankaranarayanan R."/>
        </authorList>
    </citation>
    <scope>FUNCTION</scope>
    <scope>SUBSTRATE SPECIFICITY</scope>
</reference>
<reference key="6">
    <citation type="journal article" date="2017" name="Elife">
        <title>Role of D-aminoacyl-tRNA deacylase beyond chiral proofreading as a cellular defense against glycine mischarging by AlaRS.</title>
        <authorList>
            <person name="Pawar K.I."/>
            <person name="Suma K."/>
            <person name="Seenivasan A."/>
            <person name="Kuncha S.K."/>
            <person name="Routh S.B."/>
            <person name="Kruparani S.P."/>
            <person name="Sankaranarayanan R."/>
        </authorList>
    </citation>
    <scope>FUNCTION</scope>
    <scope>CATALYTIC ACTIVITY</scope>
</reference>
<organism>
    <name type="scientific">Drosophila melanogaster</name>
    <name type="common">Fruit fly</name>
    <dbReference type="NCBI Taxonomy" id="7227"/>
    <lineage>
        <taxon>Eukaryota</taxon>
        <taxon>Metazoa</taxon>
        <taxon>Ecdysozoa</taxon>
        <taxon>Arthropoda</taxon>
        <taxon>Hexapoda</taxon>
        <taxon>Insecta</taxon>
        <taxon>Pterygota</taxon>
        <taxon>Neoptera</taxon>
        <taxon>Endopterygota</taxon>
        <taxon>Diptera</taxon>
        <taxon>Brachycera</taxon>
        <taxon>Muscomorpha</taxon>
        <taxon>Ephydroidea</taxon>
        <taxon>Drosophilidae</taxon>
        <taxon>Drosophila</taxon>
        <taxon>Sophophora</taxon>
    </lineage>
</organism>
<protein>
    <recommendedName>
        <fullName evidence="1">D-aminoacyl-tRNA deacylase</fullName>
        <ecNumber evidence="3">3.1.1.96</ecNumber>
    </recommendedName>
    <alternativeName>
        <fullName evidence="5">Gly-tRNA(Ala) deacylase</fullName>
    </alternativeName>
    <alternativeName>
        <fullName evidence="4">Gly-tRNA(Gly) deacylase</fullName>
    </alternativeName>
</protein>
<accession>Q9VGP0</accession>
<accession>Q4V4U7</accession>
<accession>Q4V6L2</accession>